<keyword id="KW-0238">DNA-binding</keyword>
<keyword id="KW-0371">Homeobox</keyword>
<keyword id="KW-0539">Nucleus</keyword>
<keyword id="KW-1185">Reference proteome</keyword>
<keyword id="KW-0804">Transcription</keyword>
<keyword id="KW-0805">Transcription regulation</keyword>
<organism>
    <name type="scientific">Oryza sativa subsp. indica</name>
    <name type="common">Rice</name>
    <dbReference type="NCBI Taxonomy" id="39946"/>
    <lineage>
        <taxon>Eukaryota</taxon>
        <taxon>Viridiplantae</taxon>
        <taxon>Streptophyta</taxon>
        <taxon>Embryophyta</taxon>
        <taxon>Tracheophyta</taxon>
        <taxon>Spermatophyta</taxon>
        <taxon>Magnoliopsida</taxon>
        <taxon>Liliopsida</taxon>
        <taxon>Poales</taxon>
        <taxon>Poaceae</taxon>
        <taxon>BOP clade</taxon>
        <taxon>Oryzoideae</taxon>
        <taxon>Oryzeae</taxon>
        <taxon>Oryzinae</taxon>
        <taxon>Oryza</taxon>
        <taxon>Oryza sativa</taxon>
    </lineage>
</organism>
<comment type="function">
    <text evidence="3">Probable transcription factor that binds to the DNA sequence 5'-CAAT[AT]ATTG-3'.</text>
</comment>
<comment type="subcellular location">
    <subcellularLocation>
        <location evidence="5">Nucleus</location>
    </subcellularLocation>
</comment>
<comment type="tissue specificity">
    <text evidence="3 4">Expressed in seedlings, roots, leaves, nodes, internodes, flowers and embryo.</text>
</comment>
<comment type="similarity">
    <text evidence="5">Belongs to the HD-ZIP homeobox family. Class I subfamily.</text>
</comment>
<comment type="sequence caution" evidence="5">
    <conflict type="miscellaneous discrepancy">
        <sequence resource="EMBL-CDS" id="AAD37699"/>
    </conflict>
    <text>Probable cloning artifact leading to a deletion into the sequence.</text>
</comment>
<reference key="1">
    <citation type="journal article" date="2000" name="Mol. Gen. Genet.">
        <title>HD-Zip proteins of families I and II from rice: interactions and functional properties.</title>
        <authorList>
            <person name="Meijer A.H."/>
            <person name="de Kam R.J."/>
            <person name="d'Erfurth I."/>
            <person name="Shen W.-B."/>
            <person name="Hoge J.H.C."/>
        </authorList>
    </citation>
    <scope>NUCLEOTIDE SEQUENCE [MRNA]</scope>
    <scope>FUNCTION</scope>
    <scope>TISSUE SPECIFICITY</scope>
    <source>
        <strain>cv. IR58</strain>
        <tissue>Seed embryo</tissue>
    </source>
</reference>
<reference key="2">
    <citation type="journal article" date="2005" name="PLoS Biol.">
        <title>The genomes of Oryza sativa: a history of duplications.</title>
        <authorList>
            <person name="Yu J."/>
            <person name="Wang J."/>
            <person name="Lin W."/>
            <person name="Li S."/>
            <person name="Li H."/>
            <person name="Zhou J."/>
            <person name="Ni P."/>
            <person name="Dong W."/>
            <person name="Hu S."/>
            <person name="Zeng C."/>
            <person name="Zhang J."/>
            <person name="Zhang Y."/>
            <person name="Li R."/>
            <person name="Xu Z."/>
            <person name="Li S."/>
            <person name="Li X."/>
            <person name="Zheng H."/>
            <person name="Cong L."/>
            <person name="Lin L."/>
            <person name="Yin J."/>
            <person name="Geng J."/>
            <person name="Li G."/>
            <person name="Shi J."/>
            <person name="Liu J."/>
            <person name="Lv H."/>
            <person name="Li J."/>
            <person name="Wang J."/>
            <person name="Deng Y."/>
            <person name="Ran L."/>
            <person name="Shi X."/>
            <person name="Wang X."/>
            <person name="Wu Q."/>
            <person name="Li C."/>
            <person name="Ren X."/>
            <person name="Wang J."/>
            <person name="Wang X."/>
            <person name="Li D."/>
            <person name="Liu D."/>
            <person name="Zhang X."/>
            <person name="Ji Z."/>
            <person name="Zhao W."/>
            <person name="Sun Y."/>
            <person name="Zhang Z."/>
            <person name="Bao J."/>
            <person name="Han Y."/>
            <person name="Dong L."/>
            <person name="Ji J."/>
            <person name="Chen P."/>
            <person name="Wu S."/>
            <person name="Liu J."/>
            <person name="Xiao Y."/>
            <person name="Bu D."/>
            <person name="Tan J."/>
            <person name="Yang L."/>
            <person name="Ye C."/>
            <person name="Zhang J."/>
            <person name="Xu J."/>
            <person name="Zhou Y."/>
            <person name="Yu Y."/>
            <person name="Zhang B."/>
            <person name="Zhuang S."/>
            <person name="Wei H."/>
            <person name="Liu B."/>
            <person name="Lei M."/>
            <person name="Yu H."/>
            <person name="Li Y."/>
            <person name="Xu H."/>
            <person name="Wei S."/>
            <person name="He X."/>
            <person name="Fang L."/>
            <person name="Zhang Z."/>
            <person name="Zhang Y."/>
            <person name="Huang X."/>
            <person name="Su Z."/>
            <person name="Tong W."/>
            <person name="Li J."/>
            <person name="Tong Z."/>
            <person name="Li S."/>
            <person name="Ye J."/>
            <person name="Wang L."/>
            <person name="Fang L."/>
            <person name="Lei T."/>
            <person name="Chen C.-S."/>
            <person name="Chen H.-C."/>
            <person name="Xu Z."/>
            <person name="Li H."/>
            <person name="Huang H."/>
            <person name="Zhang F."/>
            <person name="Xu H."/>
            <person name="Li N."/>
            <person name="Zhao C."/>
            <person name="Li S."/>
            <person name="Dong L."/>
            <person name="Huang Y."/>
            <person name="Li L."/>
            <person name="Xi Y."/>
            <person name="Qi Q."/>
            <person name="Li W."/>
            <person name="Zhang B."/>
            <person name="Hu W."/>
            <person name="Zhang Y."/>
            <person name="Tian X."/>
            <person name="Jiao Y."/>
            <person name="Liang X."/>
            <person name="Jin J."/>
            <person name="Gao L."/>
            <person name="Zheng W."/>
            <person name="Hao B."/>
            <person name="Liu S.-M."/>
            <person name="Wang W."/>
            <person name="Yuan L."/>
            <person name="Cao M."/>
            <person name="McDermott J."/>
            <person name="Samudrala R."/>
            <person name="Wang J."/>
            <person name="Wong G.K.-S."/>
            <person name="Yang H."/>
        </authorList>
    </citation>
    <scope>NUCLEOTIDE SEQUENCE [LARGE SCALE GENOMIC DNA]</scope>
    <source>
        <strain>cv. 93-11</strain>
    </source>
</reference>
<reference key="3">
    <citation type="journal article" date="2008" name="Plant Mol. Biol.">
        <title>A genome-wide survey of HD-Zip genes in rice and analysis of drought-responsive family members.</title>
        <authorList>
            <person name="Agalou A."/>
            <person name="Purwantomo S."/>
            <person name="Oevernaes E."/>
            <person name="Johannesson H."/>
            <person name="Zhu X."/>
            <person name="Estiati A."/>
            <person name="de Kam R.J."/>
            <person name="Engstroem P."/>
            <person name="Slamet-Loedin I.H."/>
            <person name="Zhu Z."/>
            <person name="Wang M."/>
            <person name="Xiong L."/>
            <person name="Meijer A.H."/>
            <person name="Ouwerkerk P.B.F."/>
        </authorList>
    </citation>
    <scope>NUCLEOTIDE SEQUENCE [MRNA] OF 135-249</scope>
    <scope>TISSUE SPECIFICITY</scope>
    <scope>GENE FAMILY</scope>
    <scope>NOMENCLATURE</scope>
    <source>
        <strain>cv. Minghui 86</strain>
    </source>
</reference>
<gene>
    <name type="primary">HOX6</name>
    <name type="ORF">OsI_031063</name>
</gene>
<evidence type="ECO:0000255" key="1">
    <source>
        <dbReference type="PROSITE-ProRule" id="PRU00108"/>
    </source>
</evidence>
<evidence type="ECO:0000256" key="2">
    <source>
        <dbReference type="SAM" id="MobiDB-lite"/>
    </source>
</evidence>
<evidence type="ECO:0000269" key="3">
    <source>
    </source>
</evidence>
<evidence type="ECO:0000269" key="4">
    <source>
    </source>
</evidence>
<evidence type="ECO:0000305" key="5"/>
<sequence>MDGEEDSEWMMMDVGGKGGKGGGGGGAADRKKRFSEEQIKSLESMFATQTKLEPRQKLQLARELGLQPRQVAIWFQNKRARWKSKQLEREYSALRDDYDALLCSYESLKKEKLALIKQLEKLAEMLQEPRGKYGDNAGDDARSGGVAGMKKEEFVGAGGAATLYSSAEGGGTTTTTTAKLMPHFGSDDVDAGLFLRPSSQHHPPPPHAGAGFTSSEPAADHQSFNFHSSWPSSTEQTCSSTPWWEFESE</sequence>
<name>HOX6_ORYSI</name>
<feature type="chain" id="PRO_0000331684" description="Homeobox-leucine zipper protein HOX6">
    <location>
        <begin position="1"/>
        <end position="249"/>
    </location>
</feature>
<feature type="DNA-binding region" description="Homeobox" evidence="1">
    <location>
        <begin position="27"/>
        <end position="86"/>
    </location>
</feature>
<feature type="region of interest" description="Disordered" evidence="2">
    <location>
        <begin position="1"/>
        <end position="32"/>
    </location>
</feature>
<feature type="region of interest" description="Leucine-zipper">
    <location>
        <begin position="85"/>
        <end position="129"/>
    </location>
</feature>
<feature type="region of interest" description="Disordered" evidence="2">
    <location>
        <begin position="194"/>
        <end position="249"/>
    </location>
</feature>
<feature type="compositionally biased region" description="Gly residues" evidence="2">
    <location>
        <begin position="15"/>
        <end position="27"/>
    </location>
</feature>
<feature type="compositionally biased region" description="Polar residues" evidence="2">
    <location>
        <begin position="212"/>
        <end position="242"/>
    </location>
</feature>
<accession>Q9XH35</accession>
<accession>A2Z3C0</accession>
<accession>A5JPU3</accession>
<protein>
    <recommendedName>
        <fullName>Homeobox-leucine zipper protein HOX6</fullName>
    </recommendedName>
    <alternativeName>
        <fullName>HD-ZIP protein HOX6</fullName>
    </alternativeName>
    <alternativeName>
        <fullName>Homeodomain transcription factor HOX6</fullName>
    </alternativeName>
    <alternativeName>
        <fullName>OsHox6</fullName>
    </alternativeName>
</protein>
<dbReference type="EMBL" id="AF145730">
    <property type="protein sequence ID" value="AAD37699.1"/>
    <property type="status" value="ALT_SEQ"/>
    <property type="molecule type" value="mRNA"/>
</dbReference>
<dbReference type="EMBL" id="CM000134">
    <property type="status" value="NOT_ANNOTATED_CDS"/>
    <property type="molecule type" value="Genomic_DNA"/>
</dbReference>
<dbReference type="EMBL" id="EF555526">
    <property type="protein sequence ID" value="ABQ57269.1"/>
    <property type="molecule type" value="mRNA"/>
</dbReference>
<dbReference type="SMR" id="Q9XH35"/>
<dbReference type="EnsemblPlants" id="OsGoSa_09g0017200.01">
    <property type="protein sequence ID" value="OsGoSa_09g0017200.01"/>
    <property type="gene ID" value="OsGoSa_09g0017200"/>
</dbReference>
<dbReference type="EnsemblPlants" id="OsIR64_09g0017340.01">
    <property type="protein sequence ID" value="OsIR64_09g0017340.01"/>
    <property type="gene ID" value="OsIR64_09g0017340"/>
</dbReference>
<dbReference type="EnsemblPlants" id="OsKYG_09g0017160.01">
    <property type="protein sequence ID" value="OsKYG_09g0017160.01"/>
    <property type="gene ID" value="OsKYG_09g0017160"/>
</dbReference>
<dbReference type="EnsemblPlants" id="OsLaMu_09g0017240.01">
    <property type="protein sequence ID" value="OsLaMu_09g0017240.01"/>
    <property type="gene ID" value="OsLaMu_09g0017240"/>
</dbReference>
<dbReference type="EnsemblPlants" id="OsLima_09g0017380.01">
    <property type="protein sequence ID" value="OsLima_09g0017380.01"/>
    <property type="gene ID" value="OsLima_09g0017380"/>
</dbReference>
<dbReference type="EnsemblPlants" id="OsLiXu_09g0017110.01">
    <property type="protein sequence ID" value="OsLiXu_09g0017110.01"/>
    <property type="gene ID" value="OsLiXu_09g0017110"/>
</dbReference>
<dbReference type="EnsemblPlants" id="OsMH63_09G017710_01">
    <property type="protein sequence ID" value="OsMH63_09G017710_01"/>
    <property type="gene ID" value="OsMH63_09G017710"/>
</dbReference>
<dbReference type="EnsemblPlants" id="OsPr106_09g0017510.01">
    <property type="protein sequence ID" value="OsPr106_09g0017510.01"/>
    <property type="gene ID" value="OsPr106_09g0017510"/>
</dbReference>
<dbReference type="EnsemblPlants" id="OsZS97_09G017390_01">
    <property type="protein sequence ID" value="OsZS97_09G017390_01"/>
    <property type="gene ID" value="OsZS97_09G017390"/>
</dbReference>
<dbReference type="Gramene" id="OsGoSa_09g0017200.01">
    <property type="protein sequence ID" value="OsGoSa_09g0017200.01"/>
    <property type="gene ID" value="OsGoSa_09g0017200"/>
</dbReference>
<dbReference type="Gramene" id="OsIR64_09g0017340.01">
    <property type="protein sequence ID" value="OsIR64_09g0017340.01"/>
    <property type="gene ID" value="OsIR64_09g0017340"/>
</dbReference>
<dbReference type="Gramene" id="OsKYG_09g0017160.01">
    <property type="protein sequence ID" value="OsKYG_09g0017160.01"/>
    <property type="gene ID" value="OsKYG_09g0017160"/>
</dbReference>
<dbReference type="Gramene" id="OsLaMu_09g0017240.01">
    <property type="protein sequence ID" value="OsLaMu_09g0017240.01"/>
    <property type="gene ID" value="OsLaMu_09g0017240"/>
</dbReference>
<dbReference type="Gramene" id="OsLima_09g0017380.01">
    <property type="protein sequence ID" value="OsLima_09g0017380.01"/>
    <property type="gene ID" value="OsLima_09g0017380"/>
</dbReference>
<dbReference type="Gramene" id="OsLiXu_09g0017110.01">
    <property type="protein sequence ID" value="OsLiXu_09g0017110.01"/>
    <property type="gene ID" value="OsLiXu_09g0017110"/>
</dbReference>
<dbReference type="Gramene" id="OsMH63_09G017710_01">
    <property type="protein sequence ID" value="OsMH63_09G017710_01"/>
    <property type="gene ID" value="OsMH63_09G017710"/>
</dbReference>
<dbReference type="Gramene" id="OsPr106_09g0017510.01">
    <property type="protein sequence ID" value="OsPr106_09g0017510.01"/>
    <property type="gene ID" value="OsPr106_09g0017510"/>
</dbReference>
<dbReference type="Gramene" id="OsZS97_09G017390_01">
    <property type="protein sequence ID" value="OsZS97_09G017390_01"/>
    <property type="gene ID" value="OsZS97_09G017390"/>
</dbReference>
<dbReference type="OrthoDB" id="6159439at2759"/>
<dbReference type="Proteomes" id="UP000007015">
    <property type="component" value="Chromosome 9"/>
</dbReference>
<dbReference type="GO" id="GO:0005634">
    <property type="term" value="C:nucleus"/>
    <property type="evidence" value="ECO:0007669"/>
    <property type="project" value="UniProtKB-SubCell"/>
</dbReference>
<dbReference type="GO" id="GO:0000981">
    <property type="term" value="F:DNA-binding transcription factor activity, RNA polymerase II-specific"/>
    <property type="evidence" value="ECO:0007669"/>
    <property type="project" value="InterPro"/>
</dbReference>
<dbReference type="GO" id="GO:0043565">
    <property type="term" value="F:sequence-specific DNA binding"/>
    <property type="evidence" value="ECO:0007669"/>
    <property type="project" value="InterPro"/>
</dbReference>
<dbReference type="GO" id="GO:0045893">
    <property type="term" value="P:positive regulation of DNA-templated transcription"/>
    <property type="evidence" value="ECO:0007669"/>
    <property type="project" value="TreeGrafter"/>
</dbReference>
<dbReference type="CDD" id="cd00086">
    <property type="entry name" value="homeodomain"/>
    <property type="match status" value="1"/>
</dbReference>
<dbReference type="FunFam" id="1.10.10.60:FF:000293">
    <property type="entry name" value="Homeobox-leucine zipper protein ATHB-7"/>
    <property type="match status" value="1"/>
</dbReference>
<dbReference type="Gene3D" id="1.10.10.60">
    <property type="entry name" value="Homeodomain-like"/>
    <property type="match status" value="1"/>
</dbReference>
<dbReference type="InterPro" id="IPR001356">
    <property type="entry name" value="HD"/>
</dbReference>
<dbReference type="InterPro" id="IPR045224">
    <property type="entry name" value="HDZip_class_I_plant"/>
</dbReference>
<dbReference type="InterPro" id="IPR017970">
    <property type="entry name" value="Homeobox_CS"/>
</dbReference>
<dbReference type="InterPro" id="IPR009057">
    <property type="entry name" value="Homeodomain-like_sf"/>
</dbReference>
<dbReference type="InterPro" id="IPR000047">
    <property type="entry name" value="HTH_motif"/>
</dbReference>
<dbReference type="InterPro" id="IPR003106">
    <property type="entry name" value="Leu_zip_homeo"/>
</dbReference>
<dbReference type="PANTHER" id="PTHR24326">
    <property type="entry name" value="HOMEOBOX-LEUCINE ZIPPER PROTEIN"/>
    <property type="match status" value="1"/>
</dbReference>
<dbReference type="PANTHER" id="PTHR24326:SF122">
    <property type="entry name" value="HOMEOBOX-LEUCINE ZIPPER PROTEIN HOX6"/>
    <property type="match status" value="1"/>
</dbReference>
<dbReference type="Pfam" id="PF02183">
    <property type="entry name" value="HALZ"/>
    <property type="match status" value="1"/>
</dbReference>
<dbReference type="Pfam" id="PF00046">
    <property type="entry name" value="Homeodomain"/>
    <property type="match status" value="1"/>
</dbReference>
<dbReference type="PRINTS" id="PR00031">
    <property type="entry name" value="HTHREPRESSR"/>
</dbReference>
<dbReference type="SMART" id="SM00389">
    <property type="entry name" value="HOX"/>
    <property type="match status" value="1"/>
</dbReference>
<dbReference type="SUPFAM" id="SSF46689">
    <property type="entry name" value="Homeodomain-like"/>
    <property type="match status" value="1"/>
</dbReference>
<dbReference type="PROSITE" id="PS00027">
    <property type="entry name" value="HOMEOBOX_1"/>
    <property type="match status" value="1"/>
</dbReference>
<dbReference type="PROSITE" id="PS50071">
    <property type="entry name" value="HOMEOBOX_2"/>
    <property type="match status" value="1"/>
</dbReference>
<proteinExistence type="evidence at transcript level"/>